<gene>
    <name type="ordered locus">BQ2027_MB1448</name>
</gene>
<reference key="1">
    <citation type="journal article" date="2003" name="Proc. Natl. Acad. Sci. U.S.A.">
        <title>The complete genome sequence of Mycobacterium bovis.</title>
        <authorList>
            <person name="Garnier T."/>
            <person name="Eiglmeier K."/>
            <person name="Camus J.-C."/>
            <person name="Medina N."/>
            <person name="Mansoor H."/>
            <person name="Pryor M."/>
            <person name="Duthoy S."/>
            <person name="Grondin S."/>
            <person name="Lacroix C."/>
            <person name="Monsempe C."/>
            <person name="Simon S."/>
            <person name="Harris B."/>
            <person name="Atkin R."/>
            <person name="Doggett J."/>
            <person name="Mayes R."/>
            <person name="Keating L."/>
            <person name="Wheeler P.R."/>
            <person name="Parkhill J."/>
            <person name="Barrell B.G."/>
            <person name="Cole S.T."/>
            <person name="Gordon S.V."/>
            <person name="Hewinson R.G."/>
        </authorList>
    </citation>
    <scope>NUCLEOTIDE SEQUENCE [LARGE SCALE GENOMIC DNA]</scope>
    <source>
        <strain>ATCC BAA-935 / AF2122/97</strain>
    </source>
</reference>
<reference key="2">
    <citation type="journal article" date="2017" name="Genome Announc.">
        <title>Updated reference genome sequence and annotation of Mycobacterium bovis AF2122/97.</title>
        <authorList>
            <person name="Malone K.M."/>
            <person name="Farrell D."/>
            <person name="Stuber T.P."/>
            <person name="Schubert O.T."/>
            <person name="Aebersold R."/>
            <person name="Robbe-Austerman S."/>
            <person name="Gordon S.V."/>
        </authorList>
    </citation>
    <scope>NUCLEOTIDE SEQUENCE [LARGE SCALE GENOMIC DNA]</scope>
    <scope>GENOME REANNOTATION</scope>
    <source>
        <strain>ATCC BAA-935 / AF2122/97</strain>
    </source>
</reference>
<protein>
    <recommendedName>
        <fullName>Uncharacterized protein Mb1448</fullName>
    </recommendedName>
</protein>
<sequence>MATIGEVEVFVDHGADDVFITYPLWIGTRQADRLRQLADRARIAVGAGTAEGASNTGARLADAAGAIDVLIEIDSGHHRSGVRAEQVLEVAHAVGEAGLHLVGVFTFPGHSYAPGKPGEAGEQERRALNDAANALVAVGFPISCRSGGSTPTALLTAADGASETSRRLCAR</sequence>
<dbReference type="EMBL" id="LT708304">
    <property type="protein sequence ID" value="SIU00051.1"/>
    <property type="molecule type" value="Genomic_DNA"/>
</dbReference>
<dbReference type="RefSeq" id="NP_855100.1">
    <property type="nucleotide sequence ID" value="NC_002945.3"/>
</dbReference>
<dbReference type="SMR" id="P64844"/>
<dbReference type="KEGG" id="mbo:BQ2027_MB1448"/>
<dbReference type="PATRIC" id="fig|233413.5.peg.1583"/>
<dbReference type="Proteomes" id="UP000001419">
    <property type="component" value="Chromosome"/>
</dbReference>
<dbReference type="GO" id="GO:0008721">
    <property type="term" value="F:D-serine ammonia-lyase activity"/>
    <property type="evidence" value="ECO:0007669"/>
    <property type="project" value="TreeGrafter"/>
</dbReference>
<dbReference type="GO" id="GO:0036088">
    <property type="term" value="P:D-serine catabolic process"/>
    <property type="evidence" value="ECO:0007669"/>
    <property type="project" value="TreeGrafter"/>
</dbReference>
<dbReference type="Gene3D" id="3.20.20.10">
    <property type="entry name" value="Alanine racemase"/>
    <property type="match status" value="1"/>
</dbReference>
<dbReference type="InterPro" id="IPR001608">
    <property type="entry name" value="Ala_racemase_N"/>
</dbReference>
<dbReference type="InterPro" id="IPR051466">
    <property type="entry name" value="D-amino_acid_metab_enzyme"/>
</dbReference>
<dbReference type="InterPro" id="IPR029066">
    <property type="entry name" value="PLP-binding_barrel"/>
</dbReference>
<dbReference type="PANTHER" id="PTHR28004:SF2">
    <property type="entry name" value="D-SERINE DEHYDRATASE"/>
    <property type="match status" value="1"/>
</dbReference>
<dbReference type="PANTHER" id="PTHR28004">
    <property type="entry name" value="ZGC:162816-RELATED"/>
    <property type="match status" value="1"/>
</dbReference>
<dbReference type="Pfam" id="PF01168">
    <property type="entry name" value="Ala_racemase_N"/>
    <property type="match status" value="1"/>
</dbReference>
<dbReference type="SUPFAM" id="SSF51419">
    <property type="entry name" value="PLP-binding barrel"/>
    <property type="match status" value="1"/>
</dbReference>
<organism>
    <name type="scientific">Mycobacterium bovis (strain ATCC BAA-935 / AF2122/97)</name>
    <dbReference type="NCBI Taxonomy" id="233413"/>
    <lineage>
        <taxon>Bacteria</taxon>
        <taxon>Bacillati</taxon>
        <taxon>Actinomycetota</taxon>
        <taxon>Actinomycetes</taxon>
        <taxon>Mycobacteriales</taxon>
        <taxon>Mycobacteriaceae</taxon>
        <taxon>Mycobacterium</taxon>
        <taxon>Mycobacterium tuberculosis complex</taxon>
    </lineage>
</organism>
<feature type="chain" id="PRO_0000103840" description="Uncharacterized protein Mb1448">
    <location>
        <begin position="1"/>
        <end position="171"/>
    </location>
</feature>
<accession>P64844</accession>
<accession>A0A1R3XY98</accession>
<accession>P71681</accession>
<accession>X2BHV2</accession>
<keyword id="KW-1185">Reference proteome</keyword>
<proteinExistence type="predicted"/>
<name>Y1448_MYCBO</name>